<sequence length="197" mass="21725">MKLLEDRINTDGQVLGQDILKVDRFLTHQVDYQLMKEIGKRFAQVYADAGVTKVVTIEASGIAPALYAAESLNVPMIFAKKAKNVTMNDDLLITEVYSFTKKLTSTVQISSKLIEEGDKVLIIDDFLANGQAALGLVHLMEQAKAEVVGLGMVIEKSFQDGRQKLLDQGMKLTSLARIEKFEDGKVIFAPADDIAFD</sequence>
<dbReference type="EC" id="2.4.2.22" evidence="1"/>
<dbReference type="EMBL" id="AM406671">
    <property type="protein sequence ID" value="CAL97936.1"/>
    <property type="molecule type" value="Genomic_DNA"/>
</dbReference>
<dbReference type="RefSeq" id="WP_011835217.1">
    <property type="nucleotide sequence ID" value="NC_009004.1"/>
</dbReference>
<dbReference type="SMR" id="A2RKX0"/>
<dbReference type="STRING" id="416870.llmg_1346"/>
<dbReference type="KEGG" id="llm:llmg_1346"/>
<dbReference type="eggNOG" id="COG0503">
    <property type="taxonomic scope" value="Bacteria"/>
</dbReference>
<dbReference type="HOGENOM" id="CLU_099015_0_0_9"/>
<dbReference type="OrthoDB" id="9790678at2"/>
<dbReference type="PhylomeDB" id="A2RKX0"/>
<dbReference type="UniPathway" id="UPA00602">
    <property type="reaction ID" value="UER00658"/>
</dbReference>
<dbReference type="Proteomes" id="UP000000364">
    <property type="component" value="Chromosome"/>
</dbReference>
<dbReference type="GO" id="GO:0005737">
    <property type="term" value="C:cytoplasm"/>
    <property type="evidence" value="ECO:0007669"/>
    <property type="project" value="UniProtKB-SubCell"/>
</dbReference>
<dbReference type="GO" id="GO:0000310">
    <property type="term" value="F:xanthine phosphoribosyltransferase activity"/>
    <property type="evidence" value="ECO:0007669"/>
    <property type="project" value="UniProtKB-UniRule"/>
</dbReference>
<dbReference type="GO" id="GO:0006166">
    <property type="term" value="P:purine ribonucleoside salvage"/>
    <property type="evidence" value="ECO:0007669"/>
    <property type="project" value="UniProtKB-KW"/>
</dbReference>
<dbReference type="GO" id="GO:0046110">
    <property type="term" value="P:xanthine metabolic process"/>
    <property type="evidence" value="ECO:0007669"/>
    <property type="project" value="InterPro"/>
</dbReference>
<dbReference type="GO" id="GO:0032265">
    <property type="term" value="P:XMP salvage"/>
    <property type="evidence" value="ECO:0007669"/>
    <property type="project" value="UniProtKB-UniRule"/>
</dbReference>
<dbReference type="CDD" id="cd06223">
    <property type="entry name" value="PRTases_typeI"/>
    <property type="match status" value="1"/>
</dbReference>
<dbReference type="Gene3D" id="3.40.50.2020">
    <property type="match status" value="1"/>
</dbReference>
<dbReference type="HAMAP" id="MF_01184">
    <property type="entry name" value="XPRTase"/>
    <property type="match status" value="1"/>
</dbReference>
<dbReference type="InterPro" id="IPR000836">
    <property type="entry name" value="PRibTrfase_dom"/>
</dbReference>
<dbReference type="InterPro" id="IPR029057">
    <property type="entry name" value="PRTase-like"/>
</dbReference>
<dbReference type="InterPro" id="IPR050118">
    <property type="entry name" value="Pur/Pyrimidine_PRTase"/>
</dbReference>
<dbReference type="InterPro" id="IPR010079">
    <property type="entry name" value="Xanthine_PRibTrfase"/>
</dbReference>
<dbReference type="NCBIfam" id="NF006671">
    <property type="entry name" value="PRK09219.1"/>
    <property type="match status" value="1"/>
</dbReference>
<dbReference type="NCBIfam" id="TIGR01744">
    <property type="entry name" value="XPRTase"/>
    <property type="match status" value="1"/>
</dbReference>
<dbReference type="PANTHER" id="PTHR43864">
    <property type="entry name" value="HYPOXANTHINE/GUANINE PHOSPHORIBOSYLTRANSFERASE"/>
    <property type="match status" value="1"/>
</dbReference>
<dbReference type="PANTHER" id="PTHR43864:SF1">
    <property type="entry name" value="XANTHINE PHOSPHORIBOSYLTRANSFERASE"/>
    <property type="match status" value="1"/>
</dbReference>
<dbReference type="Pfam" id="PF00156">
    <property type="entry name" value="Pribosyltran"/>
    <property type="match status" value="1"/>
</dbReference>
<dbReference type="SUPFAM" id="SSF53271">
    <property type="entry name" value="PRTase-like"/>
    <property type="match status" value="1"/>
</dbReference>
<feature type="chain" id="PRO_0000339713" description="Xanthine phosphoribosyltransferase">
    <location>
        <begin position="1"/>
        <end position="197"/>
    </location>
</feature>
<feature type="binding site" evidence="1">
    <location>
        <position position="20"/>
    </location>
    <ligand>
        <name>xanthine</name>
        <dbReference type="ChEBI" id="CHEBI:17712"/>
    </ligand>
</feature>
<feature type="binding site" evidence="1">
    <location>
        <position position="27"/>
    </location>
    <ligand>
        <name>xanthine</name>
        <dbReference type="ChEBI" id="CHEBI:17712"/>
    </ligand>
</feature>
<feature type="binding site" evidence="1">
    <location>
        <begin position="128"/>
        <end position="132"/>
    </location>
    <ligand>
        <name>5-phospho-alpha-D-ribose 1-diphosphate</name>
        <dbReference type="ChEBI" id="CHEBI:58017"/>
    </ligand>
</feature>
<feature type="binding site" evidence="1">
    <location>
        <position position="156"/>
    </location>
    <ligand>
        <name>xanthine</name>
        <dbReference type="ChEBI" id="CHEBI:17712"/>
    </ligand>
</feature>
<gene>
    <name evidence="1" type="primary">xpt</name>
    <name type="ordered locus">llmg_1346</name>
</gene>
<comment type="function">
    <text evidence="1">Converts the preformed base xanthine, a product of nucleic acid breakdown, to xanthosine 5'-monophosphate (XMP), so it can be reused for RNA or DNA synthesis.</text>
</comment>
<comment type="catalytic activity">
    <reaction evidence="1">
        <text>XMP + diphosphate = xanthine + 5-phospho-alpha-D-ribose 1-diphosphate</text>
        <dbReference type="Rhea" id="RHEA:10800"/>
        <dbReference type="ChEBI" id="CHEBI:17712"/>
        <dbReference type="ChEBI" id="CHEBI:33019"/>
        <dbReference type="ChEBI" id="CHEBI:57464"/>
        <dbReference type="ChEBI" id="CHEBI:58017"/>
        <dbReference type="EC" id="2.4.2.22"/>
    </reaction>
</comment>
<comment type="pathway">
    <text evidence="1">Purine metabolism; XMP biosynthesis via salvage pathway; XMP from xanthine: step 1/1.</text>
</comment>
<comment type="subunit">
    <text evidence="1">Homodimer.</text>
</comment>
<comment type="subcellular location">
    <subcellularLocation>
        <location evidence="1">Cytoplasm</location>
    </subcellularLocation>
</comment>
<comment type="similarity">
    <text evidence="1">Belongs to the purine/pyrimidine phosphoribosyltransferase family. Xpt subfamily.</text>
</comment>
<proteinExistence type="inferred from homology"/>
<reference key="1">
    <citation type="journal article" date="2007" name="J. Bacteriol.">
        <title>The complete genome sequence of the lactic acid bacterial paradigm Lactococcus lactis subsp. cremoris MG1363.</title>
        <authorList>
            <person name="Wegmann U."/>
            <person name="O'Connell-Motherway M."/>
            <person name="Zomer A."/>
            <person name="Buist G."/>
            <person name="Shearman C."/>
            <person name="Canchaya C."/>
            <person name="Ventura M."/>
            <person name="Goesmann A."/>
            <person name="Gasson M.J."/>
            <person name="Kuipers O.P."/>
            <person name="van Sinderen D."/>
            <person name="Kok J."/>
        </authorList>
    </citation>
    <scope>NUCLEOTIDE SEQUENCE [LARGE SCALE GENOMIC DNA]</scope>
    <source>
        <strain>MG1363</strain>
    </source>
</reference>
<name>XPT_LACLM</name>
<keyword id="KW-0963">Cytoplasm</keyword>
<keyword id="KW-0328">Glycosyltransferase</keyword>
<keyword id="KW-0660">Purine salvage</keyword>
<keyword id="KW-0808">Transferase</keyword>
<organism>
    <name type="scientific">Lactococcus lactis subsp. cremoris (strain MG1363)</name>
    <dbReference type="NCBI Taxonomy" id="416870"/>
    <lineage>
        <taxon>Bacteria</taxon>
        <taxon>Bacillati</taxon>
        <taxon>Bacillota</taxon>
        <taxon>Bacilli</taxon>
        <taxon>Lactobacillales</taxon>
        <taxon>Streptococcaceae</taxon>
        <taxon>Lactococcus</taxon>
        <taxon>Lactococcus cremoris subsp. cremoris</taxon>
    </lineage>
</organism>
<protein>
    <recommendedName>
        <fullName evidence="1">Xanthine phosphoribosyltransferase</fullName>
        <shortName evidence="1">XPRTase</shortName>
        <ecNumber evidence="1">2.4.2.22</ecNumber>
    </recommendedName>
</protein>
<evidence type="ECO:0000255" key="1">
    <source>
        <dbReference type="HAMAP-Rule" id="MF_01184"/>
    </source>
</evidence>
<accession>A2RKX0</accession>